<sequence>MSVNRILVINPGSTSTKIGVFDNERPVLEETIRHDEEQIGKYKRIIDQYEFRKETILEVLHSHGINISKLNAVCGRGGLLRPIEGGTYTVNDAMLEDLKNGFSGHHASNLGGILAYEIASGLNIPAFIVDPVVVDEMEPIARISGIAGMERKSIFHALNQKAVARKVAEELNHKYEDLNLLVTHMGGGITVGAHKKGKVIDVNNGLNGEGPFSPERAGTVPVGQLVEMCFSGEYYRDEMIKKLVGQGGLVSLIGTNDAIKVEQMVEKGDPEATLIYKAMAYQVAKEIGGASAVLHGKIDAIVLTGGLAYSKILVDEIKERVDWIADVIVHPGEDELQALAEGALRVLREEEAPKEYIVREKETVARG</sequence>
<comment type="catalytic activity">
    <reaction evidence="1">
        <text>butanoate + ATP = butanoyl phosphate + ADP</text>
        <dbReference type="Rhea" id="RHEA:13585"/>
        <dbReference type="ChEBI" id="CHEBI:17968"/>
        <dbReference type="ChEBI" id="CHEBI:30616"/>
        <dbReference type="ChEBI" id="CHEBI:58079"/>
        <dbReference type="ChEBI" id="CHEBI:456216"/>
        <dbReference type="EC" id="2.7.2.7"/>
    </reaction>
</comment>
<comment type="subcellular location">
    <subcellularLocation>
        <location evidence="1">Cytoplasm</location>
    </subcellularLocation>
</comment>
<comment type="similarity">
    <text evidence="1">Belongs to the acetokinase family.</text>
</comment>
<name>BUK_BACCZ</name>
<feature type="chain" id="PRO_1000061064" description="Probable butyrate kinase">
    <location>
        <begin position="1"/>
        <end position="367"/>
    </location>
</feature>
<evidence type="ECO:0000255" key="1">
    <source>
        <dbReference type="HAMAP-Rule" id="MF_00542"/>
    </source>
</evidence>
<organism>
    <name type="scientific">Bacillus cereus (strain ZK / E33L)</name>
    <dbReference type="NCBI Taxonomy" id="288681"/>
    <lineage>
        <taxon>Bacteria</taxon>
        <taxon>Bacillati</taxon>
        <taxon>Bacillota</taxon>
        <taxon>Bacilli</taxon>
        <taxon>Bacillales</taxon>
        <taxon>Bacillaceae</taxon>
        <taxon>Bacillus</taxon>
        <taxon>Bacillus cereus group</taxon>
    </lineage>
</organism>
<gene>
    <name evidence="1" type="primary">buk</name>
    <name type="ordered locus">BCE33L3916</name>
</gene>
<protein>
    <recommendedName>
        <fullName evidence="1">Probable butyrate kinase</fullName>
        <shortName evidence="1">BK</shortName>
        <ecNumber evidence="1">2.7.2.7</ecNumber>
    </recommendedName>
    <alternativeName>
        <fullName evidence="1">Branched-chain carboxylic acid kinase</fullName>
    </alternativeName>
</protein>
<accession>Q635C1</accession>
<reference key="1">
    <citation type="journal article" date="2006" name="J. Bacteriol.">
        <title>Pathogenomic sequence analysis of Bacillus cereus and Bacillus thuringiensis isolates closely related to Bacillus anthracis.</title>
        <authorList>
            <person name="Han C.S."/>
            <person name="Xie G."/>
            <person name="Challacombe J.F."/>
            <person name="Altherr M.R."/>
            <person name="Bhotika S.S."/>
            <person name="Bruce D."/>
            <person name="Campbell C.S."/>
            <person name="Campbell M.L."/>
            <person name="Chen J."/>
            <person name="Chertkov O."/>
            <person name="Cleland C."/>
            <person name="Dimitrijevic M."/>
            <person name="Doggett N.A."/>
            <person name="Fawcett J.J."/>
            <person name="Glavina T."/>
            <person name="Goodwin L.A."/>
            <person name="Hill K.K."/>
            <person name="Hitchcock P."/>
            <person name="Jackson P.J."/>
            <person name="Keim P."/>
            <person name="Kewalramani A.R."/>
            <person name="Longmire J."/>
            <person name="Lucas S."/>
            <person name="Malfatti S."/>
            <person name="McMurry K."/>
            <person name="Meincke L.J."/>
            <person name="Misra M."/>
            <person name="Moseman B.L."/>
            <person name="Mundt M."/>
            <person name="Munk A.C."/>
            <person name="Okinaka R.T."/>
            <person name="Parson-Quintana B."/>
            <person name="Reilly L.P."/>
            <person name="Richardson P."/>
            <person name="Robinson D.L."/>
            <person name="Rubin E."/>
            <person name="Saunders E."/>
            <person name="Tapia R."/>
            <person name="Tesmer J.G."/>
            <person name="Thayer N."/>
            <person name="Thompson L.S."/>
            <person name="Tice H."/>
            <person name="Ticknor L.O."/>
            <person name="Wills P.L."/>
            <person name="Brettin T.S."/>
            <person name="Gilna P."/>
        </authorList>
    </citation>
    <scope>NUCLEOTIDE SEQUENCE [LARGE SCALE GENOMIC DNA]</scope>
    <source>
        <strain>ZK / E33L</strain>
    </source>
</reference>
<keyword id="KW-0067">ATP-binding</keyword>
<keyword id="KW-0963">Cytoplasm</keyword>
<keyword id="KW-0418">Kinase</keyword>
<keyword id="KW-0547">Nucleotide-binding</keyword>
<keyword id="KW-0808">Transferase</keyword>
<proteinExistence type="inferred from homology"/>
<dbReference type="EC" id="2.7.2.7" evidence="1"/>
<dbReference type="EMBL" id="CP000001">
    <property type="protein sequence ID" value="AAU16352.1"/>
    <property type="molecule type" value="Genomic_DNA"/>
</dbReference>
<dbReference type="RefSeq" id="WP_000115772.1">
    <property type="nucleotide sequence ID" value="NZ_CP009968.1"/>
</dbReference>
<dbReference type="SMR" id="Q635C1"/>
<dbReference type="KEGG" id="bcz:BCE33L3916"/>
<dbReference type="PATRIC" id="fig|288681.22.peg.1483"/>
<dbReference type="Proteomes" id="UP000002612">
    <property type="component" value="Chromosome"/>
</dbReference>
<dbReference type="GO" id="GO:0005737">
    <property type="term" value="C:cytoplasm"/>
    <property type="evidence" value="ECO:0007669"/>
    <property type="project" value="UniProtKB-SubCell"/>
</dbReference>
<dbReference type="GO" id="GO:0008776">
    <property type="term" value="F:acetate kinase activity"/>
    <property type="evidence" value="ECO:0007669"/>
    <property type="project" value="TreeGrafter"/>
</dbReference>
<dbReference type="GO" id="GO:0005524">
    <property type="term" value="F:ATP binding"/>
    <property type="evidence" value="ECO:0007669"/>
    <property type="project" value="UniProtKB-KW"/>
</dbReference>
<dbReference type="GO" id="GO:0047761">
    <property type="term" value="F:butyrate kinase activity"/>
    <property type="evidence" value="ECO:0007669"/>
    <property type="project" value="UniProtKB-UniRule"/>
</dbReference>
<dbReference type="GO" id="GO:0006083">
    <property type="term" value="P:acetate metabolic process"/>
    <property type="evidence" value="ECO:0007669"/>
    <property type="project" value="TreeGrafter"/>
</dbReference>
<dbReference type="CDD" id="cd24011">
    <property type="entry name" value="ASKHA_NBD_BK"/>
    <property type="match status" value="1"/>
</dbReference>
<dbReference type="Gene3D" id="3.30.420.40">
    <property type="match status" value="2"/>
</dbReference>
<dbReference type="HAMAP" id="MF_00542">
    <property type="entry name" value="Butyrate_kinase"/>
    <property type="match status" value="1"/>
</dbReference>
<dbReference type="InterPro" id="IPR000890">
    <property type="entry name" value="Aliphatic_acid_kin_short-chain"/>
</dbReference>
<dbReference type="InterPro" id="IPR023865">
    <property type="entry name" value="Aliphatic_acid_kinase_CS"/>
</dbReference>
<dbReference type="InterPro" id="IPR043129">
    <property type="entry name" value="ATPase_NBD"/>
</dbReference>
<dbReference type="InterPro" id="IPR011245">
    <property type="entry name" value="Butyrate_kin"/>
</dbReference>
<dbReference type="NCBIfam" id="TIGR02707">
    <property type="entry name" value="butyr_kinase"/>
    <property type="match status" value="1"/>
</dbReference>
<dbReference type="NCBIfam" id="NF002834">
    <property type="entry name" value="PRK03011.1-5"/>
    <property type="match status" value="1"/>
</dbReference>
<dbReference type="PANTHER" id="PTHR21060">
    <property type="entry name" value="ACETATE KINASE"/>
    <property type="match status" value="1"/>
</dbReference>
<dbReference type="PANTHER" id="PTHR21060:SF3">
    <property type="entry name" value="BUTYRATE KINASE 2-RELATED"/>
    <property type="match status" value="1"/>
</dbReference>
<dbReference type="Pfam" id="PF00871">
    <property type="entry name" value="Acetate_kinase"/>
    <property type="match status" value="1"/>
</dbReference>
<dbReference type="PIRSF" id="PIRSF036458">
    <property type="entry name" value="Butyrate_kin"/>
    <property type="match status" value="1"/>
</dbReference>
<dbReference type="PRINTS" id="PR00471">
    <property type="entry name" value="ACETATEKNASE"/>
</dbReference>
<dbReference type="SUPFAM" id="SSF53067">
    <property type="entry name" value="Actin-like ATPase domain"/>
    <property type="match status" value="2"/>
</dbReference>
<dbReference type="PROSITE" id="PS01075">
    <property type="entry name" value="ACETATE_KINASE_1"/>
    <property type="match status" value="1"/>
</dbReference>
<dbReference type="PROSITE" id="PS01076">
    <property type="entry name" value="ACETATE_KINASE_2"/>
    <property type="match status" value="1"/>
</dbReference>